<proteinExistence type="inferred from homology"/>
<comment type="function">
    <text evidence="1">Core subunit of the mitochondrial membrane respiratory chain NADH dehydrogenase (Complex I) which catalyzes electron transfer from NADH through the respiratory chain, using ubiquinone as an electron acceptor. Part of the enzyme membrane arm which is embedded in the lipid bilayer and involved in proton translocation.</text>
</comment>
<comment type="catalytic activity">
    <reaction evidence="1">
        <text>a ubiquinone + NADH + 5 H(+)(in) = a ubiquinol + NAD(+) + 4 H(+)(out)</text>
        <dbReference type="Rhea" id="RHEA:29091"/>
        <dbReference type="Rhea" id="RHEA-COMP:9565"/>
        <dbReference type="Rhea" id="RHEA-COMP:9566"/>
        <dbReference type="ChEBI" id="CHEBI:15378"/>
        <dbReference type="ChEBI" id="CHEBI:16389"/>
        <dbReference type="ChEBI" id="CHEBI:17976"/>
        <dbReference type="ChEBI" id="CHEBI:57540"/>
        <dbReference type="ChEBI" id="CHEBI:57945"/>
        <dbReference type="EC" id="7.1.1.2"/>
    </reaction>
    <physiologicalReaction direction="left-to-right" evidence="1">
        <dbReference type="Rhea" id="RHEA:29092"/>
    </physiologicalReaction>
</comment>
<comment type="subunit">
    <text evidence="2">Core subunit of respiratory chain NADH dehydrogenase (Complex I) which is composed of 45 different subunits.</text>
</comment>
<comment type="subcellular location">
    <subcellularLocation>
        <location evidence="2">Mitochondrion inner membrane</location>
        <topology evidence="3">Multi-pass membrane protein</topology>
    </subcellularLocation>
</comment>
<comment type="similarity">
    <text evidence="4">Belongs to the complex I subunit 4L family.</text>
</comment>
<dbReference type="EC" id="7.1.1.2"/>
<dbReference type="EMBL" id="AP006474">
    <property type="protein sequence ID" value="BAD91780.1"/>
    <property type="molecule type" value="Genomic_DNA"/>
</dbReference>
<dbReference type="RefSeq" id="YP_220779.1">
    <property type="nucleotide sequence ID" value="NC_006931.1"/>
</dbReference>
<dbReference type="SMR" id="Q598U3"/>
<dbReference type="GeneID" id="3338399"/>
<dbReference type="CTD" id="4539"/>
<dbReference type="GO" id="GO:0005743">
    <property type="term" value="C:mitochondrial inner membrane"/>
    <property type="evidence" value="ECO:0000250"/>
    <property type="project" value="UniProtKB"/>
</dbReference>
<dbReference type="GO" id="GO:0045271">
    <property type="term" value="C:respiratory chain complex I"/>
    <property type="evidence" value="ECO:0000250"/>
    <property type="project" value="UniProtKB"/>
</dbReference>
<dbReference type="GO" id="GO:0008137">
    <property type="term" value="F:NADH dehydrogenase (ubiquinone) activity"/>
    <property type="evidence" value="ECO:0000250"/>
    <property type="project" value="UniProtKB"/>
</dbReference>
<dbReference type="GO" id="GO:0042773">
    <property type="term" value="P:ATP synthesis coupled electron transport"/>
    <property type="evidence" value="ECO:0007669"/>
    <property type="project" value="InterPro"/>
</dbReference>
<dbReference type="FunFam" id="1.10.287.3510:FF:000002">
    <property type="entry name" value="NADH-ubiquinone oxidoreductase chain 4L"/>
    <property type="match status" value="1"/>
</dbReference>
<dbReference type="Gene3D" id="1.10.287.3510">
    <property type="match status" value="1"/>
</dbReference>
<dbReference type="InterPro" id="IPR001133">
    <property type="entry name" value="NADH_UbQ_OxRdtase_chain4L/K"/>
</dbReference>
<dbReference type="InterPro" id="IPR039428">
    <property type="entry name" value="NUOK/Mnh_C1-like"/>
</dbReference>
<dbReference type="PANTHER" id="PTHR11434:SF0">
    <property type="entry name" value="NADH-UBIQUINONE OXIDOREDUCTASE CHAIN 4L"/>
    <property type="match status" value="1"/>
</dbReference>
<dbReference type="PANTHER" id="PTHR11434">
    <property type="entry name" value="NADH-UBIQUINONE OXIDOREDUCTASE SUBUNIT ND4L"/>
    <property type="match status" value="1"/>
</dbReference>
<dbReference type="Pfam" id="PF00420">
    <property type="entry name" value="Oxidored_q2"/>
    <property type="match status" value="1"/>
</dbReference>
<sequence>MTLIHMNIIMAFSMSLVGLLMYRSHLMSALLCLEGMMLSLFVLAALTILNSHFTLANMMPIILLVFAACEAAIGLALLVTISNTYGTDYVQNLNLLQC</sequence>
<feature type="chain" id="PRO_0000275016" description="NADH-ubiquinone oxidoreductase chain 4L">
    <location>
        <begin position="1"/>
        <end position="98"/>
    </location>
</feature>
<feature type="transmembrane region" description="Helical" evidence="3">
    <location>
        <begin position="1"/>
        <end position="21"/>
    </location>
</feature>
<feature type="transmembrane region" description="Helical" evidence="3">
    <location>
        <begin position="29"/>
        <end position="49"/>
    </location>
</feature>
<feature type="transmembrane region" description="Helical" evidence="3">
    <location>
        <begin position="61"/>
        <end position="81"/>
    </location>
</feature>
<gene>
    <name type="primary">MT-ND4L</name>
    <name type="synonym">MTND4L</name>
    <name type="synonym">NADH4L</name>
    <name type="synonym">ND4L</name>
</gene>
<name>NU4LM_EUBJA</name>
<geneLocation type="mitochondrion"/>
<accession>Q598U3</accession>
<organism>
    <name type="scientific">Eubalaena japonica</name>
    <name type="common">North Pacific right whale</name>
    <dbReference type="NCBI Taxonomy" id="302098"/>
    <lineage>
        <taxon>Eukaryota</taxon>
        <taxon>Metazoa</taxon>
        <taxon>Chordata</taxon>
        <taxon>Craniata</taxon>
        <taxon>Vertebrata</taxon>
        <taxon>Euteleostomi</taxon>
        <taxon>Mammalia</taxon>
        <taxon>Eutheria</taxon>
        <taxon>Laurasiatheria</taxon>
        <taxon>Artiodactyla</taxon>
        <taxon>Whippomorpha</taxon>
        <taxon>Cetacea</taxon>
        <taxon>Mysticeti</taxon>
        <taxon>Balaenidae</taxon>
        <taxon>Eubalaena</taxon>
    </lineage>
</organism>
<protein>
    <recommendedName>
        <fullName>NADH-ubiquinone oxidoreductase chain 4L</fullName>
        <ecNumber>7.1.1.2</ecNumber>
    </recommendedName>
    <alternativeName>
        <fullName>NADH dehydrogenase subunit 4L</fullName>
    </alternativeName>
</protein>
<reference key="1">
    <citation type="journal article" date="2005" name="Syst. Biol.">
        <title>Mitochondrial phylogenetics and evolution of mysticete whales.</title>
        <authorList>
            <person name="Sasaki T."/>
            <person name="Nikaido M."/>
            <person name="Hamilton H."/>
            <person name="Goto M."/>
            <person name="Kato H."/>
            <person name="Kanda N."/>
            <person name="Pastene L.A."/>
            <person name="Cao Y."/>
            <person name="Fordyce R.E."/>
            <person name="Hasegawa M."/>
            <person name="Okada N."/>
        </authorList>
    </citation>
    <scope>NUCLEOTIDE SEQUENCE [GENOMIC DNA]</scope>
</reference>
<evidence type="ECO:0000250" key="1">
    <source>
        <dbReference type="UniProtKB" id="P03901"/>
    </source>
</evidence>
<evidence type="ECO:0000250" key="2">
    <source>
        <dbReference type="UniProtKB" id="P03902"/>
    </source>
</evidence>
<evidence type="ECO:0000255" key="3"/>
<evidence type="ECO:0000305" key="4"/>
<keyword id="KW-0249">Electron transport</keyword>
<keyword id="KW-0472">Membrane</keyword>
<keyword id="KW-0496">Mitochondrion</keyword>
<keyword id="KW-0999">Mitochondrion inner membrane</keyword>
<keyword id="KW-0520">NAD</keyword>
<keyword id="KW-0679">Respiratory chain</keyword>
<keyword id="KW-1278">Translocase</keyword>
<keyword id="KW-0812">Transmembrane</keyword>
<keyword id="KW-1133">Transmembrane helix</keyword>
<keyword id="KW-0813">Transport</keyword>
<keyword id="KW-0830">Ubiquinone</keyword>